<organism>
    <name type="scientific">Mus musculus</name>
    <name type="common">Mouse</name>
    <dbReference type="NCBI Taxonomy" id="10090"/>
    <lineage>
        <taxon>Eukaryota</taxon>
        <taxon>Metazoa</taxon>
        <taxon>Chordata</taxon>
        <taxon>Craniata</taxon>
        <taxon>Vertebrata</taxon>
        <taxon>Euteleostomi</taxon>
        <taxon>Mammalia</taxon>
        <taxon>Eutheria</taxon>
        <taxon>Euarchontoglires</taxon>
        <taxon>Glires</taxon>
        <taxon>Rodentia</taxon>
        <taxon>Myomorpha</taxon>
        <taxon>Muroidea</taxon>
        <taxon>Muridae</taxon>
        <taxon>Murinae</taxon>
        <taxon>Mus</taxon>
        <taxon>Mus</taxon>
    </lineage>
</organism>
<evidence type="ECO:0000250" key="1">
    <source>
        <dbReference type="UniProtKB" id="O75342"/>
    </source>
</evidence>
<evidence type="ECO:0000255" key="2">
    <source>
        <dbReference type="PROSITE-ProRule" id="PRU00152"/>
    </source>
</evidence>
<evidence type="ECO:0000255" key="3">
    <source>
        <dbReference type="PROSITE-ProRule" id="PRU00726"/>
    </source>
</evidence>
<evidence type="ECO:0000269" key="4">
    <source>
    </source>
</evidence>
<evidence type="ECO:0000269" key="5">
    <source>
    </source>
</evidence>
<evidence type="ECO:0000269" key="6">
    <source>
    </source>
</evidence>
<evidence type="ECO:0000269" key="7">
    <source>
    </source>
</evidence>
<evidence type="ECO:0000269" key="8">
    <source>
    </source>
</evidence>
<evidence type="ECO:0000269" key="9">
    <source>
    </source>
</evidence>
<evidence type="ECO:0000269" key="10">
    <source>
    </source>
</evidence>
<evidence type="ECO:0000269" key="11">
    <source>
    </source>
</evidence>
<evidence type="ECO:0000305" key="12"/>
<evidence type="ECO:0000305" key="13">
    <source>
    </source>
</evidence>
<evidence type="ECO:0000305" key="14">
    <source>
    </source>
</evidence>
<evidence type="ECO:0000312" key="15">
    <source>
        <dbReference type="MGI" id="MGI:1274782"/>
    </source>
</evidence>
<comment type="function">
    <text evidence="1 4 5 6 7 8 9">Catalyzes the regio and stereo-specific incorporation of a single molecule of dioxygen into free and esterified polyunsaturated fatty acids generating lipid hydroperoxides that can be further reduced to the corresponding hydroxy species (PubMed:16129665). Does not convert arachidonic acid to (12R)-hydroperoxyeicosatetraenoic acid/(12R)-HPETE (PubMed:10100631, PubMed:11256953). In the skin, acts upstream of ALOXE3 on the lineolate moiety of esterified omega-hydroxyacyl-sphingosine (EOS) ceramides to produce an epoxy-ketone derivative, a crucial step in the conjugation of omega-hydroxyceramide to membrane proteins. Therefore plays a crucial role in the synthesis of corneocytes lipid envelope and the establishment of the skin barrier to water loss (PubMed:17403930, PubMed:17429434, PubMed:21558561). May also play a role in the regulation of the expression of airway mucins (By similarity).</text>
</comment>
<comment type="catalytic activity">
    <reaction evidence="4 5 6">
        <text>1-O-methyl-(5Z,8Z,11Z,14Z)-eicosatetraenoate + O2 = 1-O-methyl (5Z,8Z,10E,12R,14Z)-hydroperoxyiecosatetraenoate</text>
        <dbReference type="Rhea" id="RHEA:41311"/>
        <dbReference type="ChEBI" id="CHEBI:15379"/>
        <dbReference type="ChEBI" id="CHEBI:78033"/>
        <dbReference type="ChEBI" id="CHEBI:78034"/>
    </reaction>
    <physiologicalReaction direction="left-to-right" evidence="4 5">
        <dbReference type="Rhea" id="RHEA:41312"/>
    </physiologicalReaction>
</comment>
<comment type="catalytic activity">
    <reaction evidence="4">
        <text>1-O-methyl-(5Z,8Z,11Z,14Z)-eicosatetraenoate + O2 = 1-O-methyl-8-hydroperoxy-(5Z,9E,11Z,14Z)-eicosatetraenoate</text>
        <dbReference type="Rhea" id="RHEA:43480"/>
        <dbReference type="ChEBI" id="CHEBI:15379"/>
        <dbReference type="ChEBI" id="CHEBI:78033"/>
        <dbReference type="ChEBI" id="CHEBI:83344"/>
    </reaction>
    <physiologicalReaction direction="left-to-right" evidence="4 5">
        <dbReference type="Rhea" id="RHEA:43481"/>
    </physiologicalReaction>
</comment>
<comment type="catalytic activity">
    <reaction evidence="1">
        <text>(5Z,8Z,11Z,14Z)-eicosatetraenoate + O2 = (12R)-hydroperoxy-(5Z,8Z,10E,14Z)-eicosatetraenoate</text>
        <dbReference type="Rhea" id="RHEA:41336"/>
        <dbReference type="ChEBI" id="CHEBI:15379"/>
        <dbReference type="ChEBI" id="CHEBI:32395"/>
        <dbReference type="ChEBI" id="CHEBI:75230"/>
    </reaction>
    <physiologicalReaction direction="left-to-right" evidence="1">
        <dbReference type="Rhea" id="RHEA:41337"/>
    </physiologicalReaction>
</comment>
<comment type="catalytic activity">
    <reaction evidence="1">
        <text>N-[omega-(9Z,12Z)-octadecadienoyloxy]acyl-beta-D-glucosyl-(1&lt;-&gt;1)-octadecasphing-4E-enine + O2 = N-[omega-(9R)-hydroperoxy-(10E,12Z)-octadecadienoyloxy]acyl-beta-D-glucosyl-(1&lt;-&gt;1)-octadecasphing-4E-enine</text>
        <dbReference type="Rhea" id="RHEA:40495"/>
        <dbReference type="ChEBI" id="CHEBI:15379"/>
        <dbReference type="ChEBI" id="CHEBI:134621"/>
        <dbReference type="ChEBI" id="CHEBI:134624"/>
    </reaction>
    <physiologicalReaction direction="left-to-right" evidence="1">
        <dbReference type="Rhea" id="RHEA:40496"/>
    </physiologicalReaction>
</comment>
<comment type="catalytic activity">
    <reaction evidence="1">
        <text>a N-[omega-(9Z,12Z)-octadecadienoyloxy]-acylsphin-4E-enine + O2 = a N-[omega-(9R)-hydroperoxy-(10E,12Z)-octadecadienoyloxy]-acylsphin-4E-enine</text>
        <dbReference type="Rhea" id="RHEA:41239"/>
        <dbReference type="ChEBI" id="CHEBI:15379"/>
        <dbReference type="ChEBI" id="CHEBI:77888"/>
        <dbReference type="ChEBI" id="CHEBI:77889"/>
    </reaction>
    <physiologicalReaction direction="left-to-right" evidence="1">
        <dbReference type="Rhea" id="RHEA:41240"/>
    </physiologicalReaction>
</comment>
<comment type="catalytic activity">
    <reaction evidence="1">
        <text>(6Z,9Z,12Z)-octadecatrienoate + O2 = 10-hydroperoxy-(6Z,8E,12Z)-octadecatrienoate</text>
        <dbReference type="Rhea" id="RHEA:43476"/>
        <dbReference type="ChEBI" id="CHEBI:15379"/>
        <dbReference type="ChEBI" id="CHEBI:32391"/>
        <dbReference type="ChEBI" id="CHEBI:83342"/>
    </reaction>
    <physiologicalReaction direction="left-to-right" evidence="1">
        <dbReference type="Rhea" id="RHEA:43477"/>
    </physiologicalReaction>
</comment>
<comment type="catalytic activity">
    <reaction evidence="1">
        <text>(4Z,7Z,10Z,13Z,16Z,19Z)-docosahexaenoate + O2 = 14-hydroperoxy-(4Z,7Z,10Z,12E,16Z,19Z)-docosahexaenoate</text>
        <dbReference type="Rhea" id="RHEA:43472"/>
        <dbReference type="ChEBI" id="CHEBI:15379"/>
        <dbReference type="ChEBI" id="CHEBI:77016"/>
        <dbReference type="ChEBI" id="CHEBI:83336"/>
    </reaction>
    <physiologicalReaction direction="left-to-right" evidence="1">
        <dbReference type="Rhea" id="RHEA:43473"/>
    </physiologicalReaction>
</comment>
<comment type="catalytic activity">
    <reaction evidence="1">
        <text>(8Z,11Z,14Z)-eicosatrienoate + O2 = (8Z,10E,14Z)-12-hydroperoxyeicosatrienoate</text>
        <dbReference type="Rhea" id="RHEA:43468"/>
        <dbReference type="ChEBI" id="CHEBI:15379"/>
        <dbReference type="ChEBI" id="CHEBI:71589"/>
        <dbReference type="ChEBI" id="CHEBI:83334"/>
    </reaction>
    <physiologicalReaction direction="left-to-right" evidence="1">
        <dbReference type="Rhea" id="RHEA:43469"/>
    </physiologicalReaction>
</comment>
<comment type="catalytic activity">
    <reaction evidence="1">
        <text>(5Z,8Z,11Z,14Z,17Z)-eicosapentaenoate + O2 = (5Z,7Z,8Z,10E,14Z,17Z)-12-hydroperoxyeicosapentaenoate</text>
        <dbReference type="Rhea" id="RHEA:41344"/>
        <dbReference type="ChEBI" id="CHEBI:15379"/>
        <dbReference type="ChEBI" id="CHEBI:58562"/>
        <dbReference type="ChEBI" id="CHEBI:78078"/>
    </reaction>
    <physiologicalReaction direction="left-to-right" evidence="1">
        <dbReference type="Rhea" id="RHEA:41345"/>
    </physiologicalReaction>
</comment>
<comment type="catalytic activity">
    <reaction evidence="1">
        <text>(6Z,9Z,12Z)-octadecatrienoate + O2 = 10R-hydroperoxy-(6Z,8E,12Z)-octadecatrienoate</text>
        <dbReference type="Rhea" id="RHEA:41340"/>
        <dbReference type="ChEBI" id="CHEBI:15379"/>
        <dbReference type="ChEBI" id="CHEBI:32391"/>
        <dbReference type="ChEBI" id="CHEBI:78070"/>
    </reaction>
    <physiologicalReaction direction="left-to-right" evidence="1">
        <dbReference type="Rhea" id="RHEA:41341"/>
    </physiologicalReaction>
</comment>
<comment type="catalytic activity">
    <reaction evidence="5 6">
        <text>1-O-methyl-(5Z,8Z,11Z,14Z)-eicosatetraenoate + O2 = 1-O-methyl-(8R)-hydroperoxy-(5Z,9E,11Z,14Z)-eicosatrienoate</text>
        <dbReference type="Rhea" id="RHEA:61868"/>
        <dbReference type="ChEBI" id="CHEBI:15379"/>
        <dbReference type="ChEBI" id="CHEBI:78033"/>
        <dbReference type="ChEBI" id="CHEBI:78180"/>
    </reaction>
    <physiologicalReaction direction="left-to-right" evidence="13">
        <dbReference type="Rhea" id="RHEA:61869"/>
    </physiologicalReaction>
</comment>
<comment type="catalytic activity">
    <reaction evidence="5 6">
        <text>1-O-methyl-(9Z,12Z)-octadecadienoate + O2 = 1-O-methyl-(9R)-hydroperoxy-(10E,12Z)-octadecadienoate</text>
        <dbReference type="Rhea" id="RHEA:61872"/>
        <dbReference type="ChEBI" id="CHEBI:15379"/>
        <dbReference type="ChEBI" id="CHEBI:69080"/>
        <dbReference type="ChEBI" id="CHEBI:145036"/>
    </reaction>
    <physiologicalReaction direction="left-to-right" evidence="13">
        <dbReference type="Rhea" id="RHEA:61873"/>
    </physiologicalReaction>
</comment>
<comment type="catalytic activity">
    <reaction evidence="6">
        <text>1-O-methyl-20-hydroxy-(5Z,8Z,11Z,14Z)-eicosatetraenoate + O2 = 1-O-methyl-8-hydroperoxy-20-hydroxy-(5Z,9E,11Z,14Z)-eicosatetraenoate</text>
        <dbReference type="Rhea" id="RHEA:61876"/>
        <dbReference type="ChEBI" id="CHEBI:15379"/>
        <dbReference type="ChEBI" id="CHEBI:145032"/>
        <dbReference type="ChEBI" id="CHEBI:145033"/>
    </reaction>
    <physiologicalReaction direction="left-to-right" evidence="13">
        <dbReference type="Rhea" id="RHEA:61877"/>
    </physiologicalReaction>
</comment>
<comment type="catalytic activity">
    <reaction evidence="6">
        <text>1-O-methyl-20-hydroxy-(5Z,8Z,11Z,14Z)-eicosatetraenoate + O2 = 1-O-methyl-12-hydroperoxy-20-hydroxy-(5Z,8Z,10E,14Z)-eicosatetraenoate</text>
        <dbReference type="Rhea" id="RHEA:61880"/>
        <dbReference type="ChEBI" id="CHEBI:15379"/>
        <dbReference type="ChEBI" id="CHEBI:145032"/>
        <dbReference type="ChEBI" id="CHEBI:145034"/>
    </reaction>
    <physiologicalReaction direction="left-to-right" evidence="13">
        <dbReference type="Rhea" id="RHEA:61881"/>
    </physiologicalReaction>
</comment>
<comment type="catalytic activity">
    <reaction evidence="6">
        <text>1-O-methyl-20-hydroxy-(5Z,8Z,11Z,14Z)-eicosatetraenoate + O2 = 1-O-methyl-9-hydroperoxy-20-hydroxy-(5Z,7E,11Z,14Z)-eicosatetraenoate</text>
        <dbReference type="Rhea" id="RHEA:61884"/>
        <dbReference type="ChEBI" id="CHEBI:15379"/>
        <dbReference type="ChEBI" id="CHEBI:145032"/>
        <dbReference type="ChEBI" id="CHEBI:145035"/>
    </reaction>
    <physiologicalReaction direction="left-to-right" evidence="13">
        <dbReference type="Rhea" id="RHEA:61885"/>
    </physiologicalReaction>
</comment>
<comment type="catalytic activity">
    <reaction evidence="6">
        <text>1-O-methyl-(9Z,12Z)-octadecadienoate + O2 = 1-O-methyl-(13S)-hydroperoxy-(9Z,11E)-octadecadienoate</text>
        <dbReference type="Rhea" id="RHEA:41756"/>
        <dbReference type="ChEBI" id="CHEBI:15379"/>
        <dbReference type="ChEBI" id="CHEBI:69080"/>
        <dbReference type="ChEBI" id="CHEBI:78040"/>
    </reaction>
    <physiologicalReaction direction="left-to-right" evidence="13">
        <dbReference type="Rhea" id="RHEA:41757"/>
    </physiologicalReaction>
</comment>
<comment type="cofactor">
    <cofactor evidence="3">
        <name>Fe cation</name>
        <dbReference type="ChEBI" id="CHEBI:24875"/>
    </cofactor>
    <text evidence="3">Binds 1 Fe cation per subunit.</text>
</comment>
<comment type="activity regulation">
    <text evidence="5">Increased by calcium.</text>
</comment>
<comment type="pathway">
    <text>Lipid metabolism; hydroperoxy eicosatetraenoic acid biosynthesis.</text>
</comment>
<comment type="pathway">
    <text>Lipid metabolism; sphingolipid metabolism.</text>
</comment>
<comment type="subcellular location">
    <subcellularLocation>
        <location evidence="3">Cytoplasm</location>
    </subcellularLocation>
    <subcellularLocation>
        <location evidence="11">Cytoplasm</location>
        <location evidence="11">Perinuclear region</location>
    </subcellularLocation>
</comment>
<comment type="tissue specificity">
    <text evidence="10">Expressed in skin epidermis and other stratified epithelia including tongue and forestomach. Low levels of expression are found in trachea, brain and lung. Not expressed in intestine, liver, kidney, adipose tissue, muscle or hematopoietic cells.</text>
</comment>
<comment type="developmental stage">
    <text evidence="11">In the embryo, expression begins at day 15.5.</text>
</comment>
<comment type="disruption phenotype">
    <text evidence="7 9">Mice die within 3 to 5 hours after birth due to defective skin barrier function loosing around 30% of body weight within 3 hours. Dehydration through the skin is increased 8 folds. The outside-in barrier acquisition is also affected, the skin remaining permeable at 18.5 dpc while it is impermeable in wild-type mice. The stratum corneum is more tightly packed while other layers are unaffected. Processing of filaggrin/FG is aberrant and the skin displays structural abnormalities. The cornified envelope is more fragile and the ceramide composition of the epidermis is altered.</text>
</comment>
<comment type="miscellaneous">
    <text evidence="14">Mummy, a recessive ethylnitrosurea-induced mutant has a nonsense mutation in the catalytic domain of Lox12b, resulting in truncation of the protein by 68 amino acids. The affected mice are born with red, shiny skin that desiccates and appears scaly. They probably die of dehydration like mice with targeted disruption of the gene (PubMed:17429434).</text>
</comment>
<comment type="similarity">
    <text evidence="12">Belongs to the lipoxygenase family.</text>
</comment>
<feature type="chain" id="PRO_0000220690" description="Arachidonate 12-lipoxygenase, 12R-type">
    <location>
        <begin position="1"/>
        <end position="701"/>
    </location>
</feature>
<feature type="domain" description="PLAT" evidence="2">
    <location>
        <begin position="2"/>
        <end position="119"/>
    </location>
</feature>
<feature type="domain" description="Lipoxygenase" evidence="3">
    <location>
        <begin position="120"/>
        <end position="701"/>
    </location>
</feature>
<feature type="binding site" evidence="3">
    <location>
        <position position="398"/>
    </location>
    <ligand>
        <name>Fe cation</name>
        <dbReference type="ChEBI" id="CHEBI:24875"/>
        <note>catalytic</note>
    </ligand>
</feature>
<feature type="binding site" evidence="3">
    <location>
        <position position="403"/>
    </location>
    <ligand>
        <name>Fe cation</name>
        <dbReference type="ChEBI" id="CHEBI:24875"/>
        <note>catalytic</note>
    </ligand>
</feature>
<feature type="binding site" evidence="3">
    <location>
        <position position="578"/>
    </location>
    <ligand>
        <name>Fe cation</name>
        <dbReference type="ChEBI" id="CHEBI:24875"/>
        <note>catalytic</note>
    </ligand>
</feature>
<feature type="binding site" evidence="3">
    <location>
        <position position="582"/>
    </location>
    <ligand>
        <name>Fe cation</name>
        <dbReference type="ChEBI" id="CHEBI:24875"/>
        <note>catalytic</note>
    </ligand>
</feature>
<feature type="binding site" evidence="3">
    <location>
        <position position="701"/>
    </location>
    <ligand>
        <name>Fe cation</name>
        <dbReference type="ChEBI" id="CHEBI:24875"/>
        <note>catalytic</note>
    </ligand>
</feature>
<feature type="sequence variant" description="In strain: C57BL/6 X SJL.">
    <original>A</original>
    <variation>V</variation>
    <location>
        <position position="9"/>
    </location>
</feature>
<feature type="sequence variant" description="In strain: C57BL/6 X SJL.">
    <original>M</original>
    <variation>V</variation>
    <location>
        <position position="351"/>
    </location>
</feature>
<feature type="sequence variant" description="In strain: C57BL/6 X SJL.">
    <original>T</original>
    <variation>I</variation>
    <location>
        <position position="361"/>
    </location>
</feature>
<feature type="mutagenesis site" description="Reduced enzymatic activity and altered stereoselectivity of the oxygenation reaction." evidence="6">
    <original>F</original>
    <variation>A</variation>
    <location>
        <position position="390"/>
    </location>
</feature>
<feature type="mutagenesis site" description="Loss of enzymatic activity." evidence="6">
    <original>F</original>
    <variation>W</variation>
    <location>
        <position position="390"/>
    </location>
</feature>
<feature type="mutagenesis site" description="Reduced enzymatic activity and changed stereoselectivity of the oxygenation reaction." evidence="6">
    <original>G</original>
    <variation>A</variation>
    <location>
        <position position="441"/>
    </location>
</feature>
<feature type="mutagenesis site" description="Loss of enzymatic activity." evidence="6">
    <original>G</original>
    <variation>V</variation>
    <location>
        <position position="441"/>
    </location>
</feature>
<feature type="mutagenesis site" description="Reduced enzymatic activity and altered stereoselectivity of the oxygenation reaction." evidence="6">
    <original>A</original>
    <variation>I</variation>
    <variation>W</variation>
    <location>
        <position position="455"/>
    </location>
</feature>
<feature type="mutagenesis site" description="Increased enzymatic activity and changed stereoselectivity of the oxygenation reaction to produce (11R)-HPETE preferentially instead of (12R)-HPETE." evidence="6">
    <original>V</original>
    <variation>A</variation>
    <variation>G</variation>
    <location>
        <position position="631"/>
    </location>
</feature>
<gene>
    <name evidence="15" type="primary">Alox12b</name>
    <name type="synonym">Aloxe2</name>
</gene>
<reference key="1">
    <citation type="journal article" date="1998" name="Biochim. Biophys. Acta">
        <title>cDNA cloning of a 8-lipoxygenase and a novel epidermis-type lipoxygenase from phorbol ester-treated mouse skin.</title>
        <authorList>
            <person name="Krieg P."/>
            <person name="Kinzig A."/>
            <person name="Heidt M."/>
            <person name="Marks F."/>
            <person name="Fuerstenberger G."/>
        </authorList>
    </citation>
    <scope>NUCLEOTIDE SEQUENCE [MRNA]</scope>
    <scope>TISSUE SPECIFICITY</scope>
    <source>
        <strain>NMRI</strain>
        <tissue>Epidermis</tissue>
    </source>
</reference>
<reference key="2">
    <citation type="journal article" date="1998" name="J. Biol. Chem.">
        <title>Human 12(R)-lipoxygenase and the mouse ortholog. Molecular cloning, expression, and gene chromosomal assignment.</title>
        <authorList>
            <person name="Sun D."/>
            <person name="McDonnell M."/>
            <person name="Chen X.-S."/>
            <person name="Lakkis M.M."/>
            <person name="Li H."/>
            <person name="Isaacs S.N."/>
            <person name="Elsea S.H."/>
            <person name="Patel P.I."/>
            <person name="Funk C.D."/>
        </authorList>
    </citation>
    <scope>NUCLEOTIDE SEQUENCE [MRNA]</scope>
    <scope>DEVELOPMENTAL STAGE</scope>
    <scope>SUBCELLULAR LOCATION</scope>
    <source>
        <strain>C57BL/6 X SJL</strain>
    </source>
</reference>
<reference key="3">
    <citation type="journal article" date="1999" name="FEBS Lett.">
        <title>Murine 12(R)-lipoxygenase: functional expression, genomic structure and chromosomal localization.</title>
        <authorList>
            <person name="Krieg P."/>
            <person name="Siebert M."/>
            <person name="Kinzig A."/>
            <person name="Bettenhausen R."/>
            <person name="Marks F."/>
            <person name="Fuerstenberger G."/>
        </authorList>
    </citation>
    <scope>CATALYTIC ACTIVITY</scope>
    <scope>FUNCTION</scope>
</reference>
<reference key="4">
    <citation type="journal article" date="2001" name="Biochem. J.">
        <title>Enzymic characterization of epidermis-derived 12-lipoxygenase isoenzymes.</title>
        <authorList>
            <person name="Siebert M."/>
            <person name="Krieg P."/>
            <person name="Lehmann W.D."/>
            <person name="Marks F."/>
            <person name="Fuerstenberger G."/>
        </authorList>
    </citation>
    <scope>CATALYTIC ACTIVITY</scope>
    <scope>FUNCTION</scope>
</reference>
<reference key="5">
    <citation type="journal article" date="2005" name="J. Biol. Chem.">
        <title>Sequence determinants for the reaction specificity of murine (12R)-lipoxygenase: targeted substrate modification and site-directed mutagenesis.</title>
        <authorList>
            <person name="Meruvu S."/>
            <person name="Walther M."/>
            <person name="Ivanov I."/>
            <person name="Hammarstroem S."/>
            <person name="Fuerstenberger G."/>
            <person name="Krieg P."/>
            <person name="Reddanna P."/>
            <person name="Kuhn H."/>
        </authorList>
    </citation>
    <scope>FUNCTION IN ARACHIDONATE METABOLISM</scope>
    <scope>CATALYTIC ACTIVITY</scope>
    <scope>REACTION MECHANISM</scope>
    <scope>PATHWAY</scope>
    <scope>MUTAGENESIS OF PHE-390; GLY-441; ALA-455 AND VAL-631</scope>
</reference>
<reference key="6">
    <citation type="journal article" date="2007" name="J. Cell Biol.">
        <title>12R-lipoxygenase deficiency disrupts epidermal barrier function.</title>
        <authorList>
            <person name="Epp N."/>
            <person name="Fuerstenberger G."/>
            <person name="Mueller K."/>
            <person name="de Juanes S."/>
            <person name="Leitges M."/>
            <person name="Hausser I."/>
            <person name="Thieme F."/>
            <person name="Liebisch G."/>
            <person name="Schmitz G."/>
            <person name="Krieg P."/>
        </authorList>
    </citation>
    <scope>FUNCTION IN SKIN BARRIER</scope>
    <scope>DISRUPTION PHENOTYPE</scope>
</reference>
<reference key="7">
    <citation type="journal article" date="2007" name="J. Invest. Dermatol.">
        <title>A mouse mutation in the 12R-lipoxygenase, Alox12b, disrupts formation of the epidermal permeability barrier.</title>
        <authorList>
            <person name="Moran J.L."/>
            <person name="Qiu H."/>
            <person name="Turbe-Doan A."/>
            <person name="Yun Y."/>
            <person name="Boeglin W.E."/>
            <person name="Brash A.R."/>
            <person name="Beier D.R."/>
        </authorList>
    </citation>
    <scope>FUNCTION IN SKIN BARRIER</scope>
    <scope>PATHWAY</scope>
</reference>
<reference key="8">
    <citation type="journal article" date="2011" name="J. Biol. Chem.">
        <title>Lipoxygenases mediate the effect of essential fatty acid in skin barrier formation: a proposed role in releasing omega-hydroxyceramide for construction of the corneocyte lipid envelope.</title>
        <authorList>
            <person name="Zheng Y."/>
            <person name="Yin H."/>
            <person name="Boeglin W.E."/>
            <person name="Elias P.M."/>
            <person name="Crumrine D."/>
            <person name="Beier D.R."/>
            <person name="Brash A.R."/>
        </authorList>
    </citation>
    <scope>FUNCTION IN SKIN BARRIER</scope>
    <scope>DISRUPTION PHENOTYPE</scope>
</reference>
<protein>
    <recommendedName>
        <fullName evidence="12">Arachidonate 12-lipoxygenase, 12R-type</fullName>
        <shortName>12R-LOX</shortName>
        <shortName>12R-lipoxygenase</shortName>
        <ecNumber evidence="4 5 6">1.13.11.-</ecNumber>
    </recommendedName>
    <alternativeName>
        <fullName>Epidermis-type lipoxygenase 12</fullName>
    </alternativeName>
    <alternativeName>
        <fullName>Epidermis-type lipoxygenase 2</fullName>
        <shortName>e-LOX 2</shortName>
    </alternativeName>
</protein>
<keyword id="KW-0963">Cytoplasm</keyword>
<keyword id="KW-0223">Dioxygenase</keyword>
<keyword id="KW-0276">Fatty acid metabolism</keyword>
<keyword id="KW-0408">Iron</keyword>
<keyword id="KW-0443">Lipid metabolism</keyword>
<keyword id="KW-0479">Metal-binding</keyword>
<keyword id="KW-0560">Oxidoreductase</keyword>
<keyword id="KW-1185">Reference proteome</keyword>
<sequence length="701" mass="80578">MATYKVKVATGTDFFSGTLDSISLTIVGTQGESHKQRLNHFGRDFATGAVDDYTVQCQQDLGELIIIRLHKEPHSFLAKDPWYCNYVQICAPDCRVYHFPAYQWMDGYETLALREATGKITADDTLPILLEHRQEEIRAKKDFYHWRVFVPGLPNYVDIPSYHPPPRRCRNPNRPEWDGYIPGFPILINIKATRFLNSNLRFSFVKTASFFYRLGPMALAFKLRGLVDRKRSWKRLKDIKNIFPATKSVVSEYVAEHWTEDSFFGYQYLNGINPGLIRRCTQIPDKFPVTDEMVAPFLGEGTCLQAELERGNIYLADYRILDGIPTVELNGQQQHHCAPMCLLHFGPDGNMMPIAIQLSQTPGPDCPIFLPNDSEWDWLLAKTWVRYAEFYSHEAVAHLLESHLIGEAFCLALLRNLPMCHPLYKLLIPHTRYNVQINSIGRALLLNKGGLSARAMSLGLEGFAQVMVRGLSELTYKSLCIPNDFVERGVQDLPGYYFRDDSLAVWYAMERYVTEIITYYYPNDAAVEGDPELQCWVQEIFKECLLGRESSGFPTCLRTIPELIEYVTMVMYTCSARHAAVNSGQLEYTSWMPNFPSSMRNPPMQTKGLTTLQTYMDTLPDVKTTCIVLLVLWTLCREPDDRRPLGHFPDIHFVEEGPRRSIEAFRQNLNQISHNIRQRNKCLTLPYYYLDPVLIENSISI</sequence>
<dbReference type="EC" id="1.13.11.-" evidence="4 5 6"/>
<dbReference type="EMBL" id="Y14334">
    <property type="protein sequence ID" value="CAA74714.1"/>
    <property type="molecule type" value="mRNA"/>
</dbReference>
<dbReference type="EMBL" id="AF059251">
    <property type="protein sequence ID" value="AAC79681.1"/>
    <property type="molecule type" value="mRNA"/>
</dbReference>
<dbReference type="CCDS" id="CCDS24885.1"/>
<dbReference type="RefSeq" id="NP_033789.1">
    <property type="nucleotide sequence ID" value="NM_009659.2"/>
</dbReference>
<dbReference type="SMR" id="O70582"/>
<dbReference type="FunCoup" id="O70582">
    <property type="interactions" value="583"/>
</dbReference>
<dbReference type="STRING" id="10090.ENSMUSP00000035250"/>
<dbReference type="SwissLipids" id="SLP:000000658"/>
<dbReference type="SwissLipids" id="SLP:000000941"/>
<dbReference type="SwissLipids" id="SLP:000000942"/>
<dbReference type="PhosphoSitePlus" id="O70582"/>
<dbReference type="PaxDb" id="10090-ENSMUSP00000035250"/>
<dbReference type="ProteomicsDB" id="292149"/>
<dbReference type="Antibodypedia" id="12404">
    <property type="antibodies" value="103 antibodies from 20 providers"/>
</dbReference>
<dbReference type="DNASU" id="11686"/>
<dbReference type="Ensembl" id="ENSMUST00000036424.3">
    <property type="protein sequence ID" value="ENSMUSP00000035250.3"/>
    <property type="gene ID" value="ENSMUSG00000032807.6"/>
</dbReference>
<dbReference type="GeneID" id="11686"/>
<dbReference type="KEGG" id="mmu:11686"/>
<dbReference type="UCSC" id="uc007jpk.1">
    <property type="organism name" value="mouse"/>
</dbReference>
<dbReference type="AGR" id="MGI:1274782"/>
<dbReference type="CTD" id="242"/>
<dbReference type="MGI" id="MGI:1274782">
    <property type="gene designation" value="Alox12b"/>
</dbReference>
<dbReference type="VEuPathDB" id="HostDB:ENSMUSG00000032807"/>
<dbReference type="eggNOG" id="ENOG502SJSP">
    <property type="taxonomic scope" value="Eukaryota"/>
</dbReference>
<dbReference type="GeneTree" id="ENSGT00940000162032"/>
<dbReference type="HOGENOM" id="CLU_004282_3_3_1"/>
<dbReference type="InParanoid" id="O70582"/>
<dbReference type="OMA" id="RYSFIKT"/>
<dbReference type="OrthoDB" id="407298at2759"/>
<dbReference type="PhylomeDB" id="O70582"/>
<dbReference type="TreeFam" id="TF105320"/>
<dbReference type="BRENDA" id="1.13.11.31">
    <property type="organism ID" value="3474"/>
</dbReference>
<dbReference type="Reactome" id="R-MMU-2142712">
    <property type="pathway name" value="Synthesis of 12-eicosatetraenoic acid derivatives"/>
</dbReference>
<dbReference type="UniPathway" id="UPA00222"/>
<dbReference type="UniPathway" id="UPA00881"/>
<dbReference type="BioGRID-ORCS" id="11686">
    <property type="hits" value="2 hits in 80 CRISPR screens"/>
</dbReference>
<dbReference type="PRO" id="PR:O70582"/>
<dbReference type="Proteomes" id="UP000000589">
    <property type="component" value="Chromosome 11"/>
</dbReference>
<dbReference type="RNAct" id="O70582">
    <property type="molecule type" value="protein"/>
</dbReference>
<dbReference type="Bgee" id="ENSMUSG00000032807">
    <property type="expression patterns" value="Expressed in esophagus and 41 other cell types or tissues"/>
</dbReference>
<dbReference type="ExpressionAtlas" id="O70582">
    <property type="expression patterns" value="baseline and differential"/>
</dbReference>
<dbReference type="GO" id="GO:0005829">
    <property type="term" value="C:cytosol"/>
    <property type="evidence" value="ECO:0007669"/>
    <property type="project" value="Ensembl"/>
</dbReference>
<dbReference type="GO" id="GO:0043231">
    <property type="term" value="C:intracellular membrane-bounded organelle"/>
    <property type="evidence" value="ECO:0007669"/>
    <property type="project" value="Ensembl"/>
</dbReference>
<dbReference type="GO" id="GO:0016020">
    <property type="term" value="C:membrane"/>
    <property type="evidence" value="ECO:0007669"/>
    <property type="project" value="GOC"/>
</dbReference>
<dbReference type="GO" id="GO:0048471">
    <property type="term" value="C:perinuclear region of cytoplasm"/>
    <property type="evidence" value="ECO:0000314"/>
    <property type="project" value="UniProtKB"/>
</dbReference>
<dbReference type="GO" id="GO:0106237">
    <property type="term" value="F:arachidonate 12(R)-lipoxygenase activity"/>
    <property type="evidence" value="ECO:0007669"/>
    <property type="project" value="RHEA"/>
</dbReference>
<dbReference type="GO" id="GO:0004052">
    <property type="term" value="F:arachidonate 12(S)-lipoxygenase activity"/>
    <property type="evidence" value="ECO:0000314"/>
    <property type="project" value="UniProtKB"/>
</dbReference>
<dbReference type="GO" id="GO:0047677">
    <property type="term" value="F:arachidonate 8(R)-lipoxygenase activity"/>
    <property type="evidence" value="ECO:0000315"/>
    <property type="project" value="UniProtKB"/>
</dbReference>
<dbReference type="GO" id="GO:0005506">
    <property type="term" value="F:iron ion binding"/>
    <property type="evidence" value="ECO:0007669"/>
    <property type="project" value="InterPro"/>
</dbReference>
<dbReference type="GO" id="GO:1990136">
    <property type="term" value="F:linoleate 9S-lipoxygenase activity"/>
    <property type="evidence" value="ECO:0000314"/>
    <property type="project" value="UniProtKB"/>
</dbReference>
<dbReference type="GO" id="GO:0019369">
    <property type="term" value="P:arachidonate metabolic process"/>
    <property type="evidence" value="ECO:0000314"/>
    <property type="project" value="UniProtKB"/>
</dbReference>
<dbReference type="GO" id="GO:0046513">
    <property type="term" value="P:ceramide biosynthetic process"/>
    <property type="evidence" value="ECO:0000315"/>
    <property type="project" value="UniProtKB"/>
</dbReference>
<dbReference type="GO" id="GO:0061436">
    <property type="term" value="P:establishment of skin barrier"/>
    <property type="evidence" value="ECO:0000315"/>
    <property type="project" value="UniProtKB"/>
</dbReference>
<dbReference type="GO" id="GO:0051122">
    <property type="term" value="P:hepoxilin biosynthetic process"/>
    <property type="evidence" value="ECO:0000250"/>
    <property type="project" value="UniProtKB"/>
</dbReference>
<dbReference type="GO" id="GO:0043651">
    <property type="term" value="P:linoleic acid metabolic process"/>
    <property type="evidence" value="ECO:0000314"/>
    <property type="project" value="UniProtKB"/>
</dbReference>
<dbReference type="GO" id="GO:0034440">
    <property type="term" value="P:lipid oxidation"/>
    <property type="evidence" value="ECO:0007669"/>
    <property type="project" value="InterPro"/>
</dbReference>
<dbReference type="GO" id="GO:0019372">
    <property type="term" value="P:lipoxygenase pathway"/>
    <property type="evidence" value="ECO:0000250"/>
    <property type="project" value="UniProtKB"/>
</dbReference>
<dbReference type="GO" id="GO:0010628">
    <property type="term" value="P:positive regulation of gene expression"/>
    <property type="evidence" value="ECO:0000250"/>
    <property type="project" value="UniProtKB"/>
</dbReference>
<dbReference type="GO" id="GO:0043410">
    <property type="term" value="P:positive regulation of MAPK cascade"/>
    <property type="evidence" value="ECO:0000250"/>
    <property type="project" value="UniProtKB"/>
</dbReference>
<dbReference type="GO" id="GO:0070257">
    <property type="term" value="P:positive regulation of mucus secretion"/>
    <property type="evidence" value="ECO:0000250"/>
    <property type="project" value="UniProtKB"/>
</dbReference>
<dbReference type="GO" id="GO:0006497">
    <property type="term" value="P:protein lipidation"/>
    <property type="evidence" value="ECO:0000315"/>
    <property type="project" value="UniProtKB"/>
</dbReference>
<dbReference type="GO" id="GO:0006665">
    <property type="term" value="P:sphingolipid metabolic process"/>
    <property type="evidence" value="ECO:0000250"/>
    <property type="project" value="UniProtKB"/>
</dbReference>
<dbReference type="CDD" id="cd01753">
    <property type="entry name" value="PLAT_LOX"/>
    <property type="match status" value="1"/>
</dbReference>
<dbReference type="FunFam" id="3.10.450.60:FF:000001">
    <property type="entry name" value="arachidonate 12-lipoxygenase, 12R-type"/>
    <property type="match status" value="1"/>
</dbReference>
<dbReference type="FunFam" id="1.20.245.10:FF:000001">
    <property type="entry name" value="Arachidonate 5-lipoxygenase a"/>
    <property type="match status" value="1"/>
</dbReference>
<dbReference type="FunFam" id="2.60.60.20:FF:000002">
    <property type="entry name" value="Arachidonate 5-lipoxygenase a"/>
    <property type="match status" value="1"/>
</dbReference>
<dbReference type="Gene3D" id="3.10.450.60">
    <property type="match status" value="1"/>
</dbReference>
<dbReference type="Gene3D" id="1.20.245.10">
    <property type="entry name" value="Lipoxygenase-1, Domain 5"/>
    <property type="match status" value="1"/>
</dbReference>
<dbReference type="Gene3D" id="2.60.60.20">
    <property type="entry name" value="PLAT/LH2 domain"/>
    <property type="match status" value="1"/>
</dbReference>
<dbReference type="InterPro" id="IPR000907">
    <property type="entry name" value="LipOase"/>
</dbReference>
<dbReference type="InterPro" id="IPR013819">
    <property type="entry name" value="LipOase_C"/>
</dbReference>
<dbReference type="InterPro" id="IPR036226">
    <property type="entry name" value="LipOase_C_sf"/>
</dbReference>
<dbReference type="InterPro" id="IPR020834">
    <property type="entry name" value="LipOase_CS"/>
</dbReference>
<dbReference type="InterPro" id="IPR020833">
    <property type="entry name" value="LipOase_Fe_BS"/>
</dbReference>
<dbReference type="InterPro" id="IPR001885">
    <property type="entry name" value="LipOase_mml"/>
</dbReference>
<dbReference type="InterPro" id="IPR001024">
    <property type="entry name" value="PLAT/LH2_dom"/>
</dbReference>
<dbReference type="InterPro" id="IPR036392">
    <property type="entry name" value="PLAT/LH2_dom_sf"/>
</dbReference>
<dbReference type="InterPro" id="IPR042062">
    <property type="entry name" value="PLAT_LOX_verte"/>
</dbReference>
<dbReference type="PANTHER" id="PTHR11771">
    <property type="entry name" value="LIPOXYGENASE"/>
    <property type="match status" value="1"/>
</dbReference>
<dbReference type="Pfam" id="PF00305">
    <property type="entry name" value="Lipoxygenase"/>
    <property type="match status" value="1"/>
</dbReference>
<dbReference type="Pfam" id="PF01477">
    <property type="entry name" value="PLAT"/>
    <property type="match status" value="1"/>
</dbReference>
<dbReference type="PRINTS" id="PR00087">
    <property type="entry name" value="LIPOXYGENASE"/>
</dbReference>
<dbReference type="PRINTS" id="PR00467">
    <property type="entry name" value="MAMLPOXGNASE"/>
</dbReference>
<dbReference type="SMART" id="SM00308">
    <property type="entry name" value="LH2"/>
    <property type="match status" value="1"/>
</dbReference>
<dbReference type="SUPFAM" id="SSF49723">
    <property type="entry name" value="Lipase/lipooxygenase domain (PLAT/LH2 domain)"/>
    <property type="match status" value="1"/>
</dbReference>
<dbReference type="SUPFAM" id="SSF48484">
    <property type="entry name" value="Lipoxigenase"/>
    <property type="match status" value="1"/>
</dbReference>
<dbReference type="PROSITE" id="PS00711">
    <property type="entry name" value="LIPOXYGENASE_1"/>
    <property type="match status" value="1"/>
</dbReference>
<dbReference type="PROSITE" id="PS00081">
    <property type="entry name" value="LIPOXYGENASE_2"/>
    <property type="match status" value="1"/>
</dbReference>
<dbReference type="PROSITE" id="PS51393">
    <property type="entry name" value="LIPOXYGENASE_3"/>
    <property type="match status" value="1"/>
</dbReference>
<dbReference type="PROSITE" id="PS50095">
    <property type="entry name" value="PLAT"/>
    <property type="match status" value="1"/>
</dbReference>
<proteinExistence type="evidence at protein level"/>
<accession>O70582</accession>
<name>LX12B_MOUSE</name>